<protein>
    <recommendedName>
        <fullName evidence="1">ATP synthase subunit a</fullName>
    </recommendedName>
    <alternativeName>
        <fullName evidence="1">ATP synthase F0 sector subunit a</fullName>
    </alternativeName>
    <alternativeName>
        <fullName evidence="1">F-ATPase subunit 6</fullName>
    </alternativeName>
</protein>
<gene>
    <name evidence="1" type="primary">atpB</name>
    <name type="ordered locus">bll1188</name>
</gene>
<comment type="function">
    <text evidence="1">Key component of the proton channel; it plays a direct role in the translocation of protons across the membrane.</text>
</comment>
<comment type="subunit">
    <text evidence="1">F-type ATPases have 2 components, CF(1) - the catalytic core - and CF(0) - the membrane proton channel. CF(1) has five subunits: alpha(3), beta(3), gamma(1), delta(1), epsilon(1). CF(0) has three main subunits: a(1), b(2) and c(9-12). The alpha and beta chains form an alternating ring which encloses part of the gamma chain. CF(1) is attached to CF(0) by a central stalk formed by the gamma and epsilon chains, while a peripheral stalk is formed by the delta and b chains.</text>
</comment>
<comment type="subcellular location">
    <subcellularLocation>
        <location evidence="1">Cell inner membrane</location>
        <topology evidence="1">Multi-pass membrane protein</topology>
    </subcellularLocation>
</comment>
<comment type="similarity">
    <text evidence="1">Belongs to the ATPase A chain family.</text>
</comment>
<organism>
    <name type="scientific">Bradyrhizobium diazoefficiens (strain JCM 10833 / BCRC 13528 / IAM 13628 / NBRC 14792 / USDA 110)</name>
    <dbReference type="NCBI Taxonomy" id="224911"/>
    <lineage>
        <taxon>Bacteria</taxon>
        <taxon>Pseudomonadati</taxon>
        <taxon>Pseudomonadota</taxon>
        <taxon>Alphaproteobacteria</taxon>
        <taxon>Hyphomicrobiales</taxon>
        <taxon>Nitrobacteraceae</taxon>
        <taxon>Bradyrhizobium</taxon>
    </lineage>
</organism>
<proteinExistence type="inferred from homology"/>
<evidence type="ECO:0000255" key="1">
    <source>
        <dbReference type="HAMAP-Rule" id="MF_01393"/>
    </source>
</evidence>
<feature type="chain" id="PRO_0000362248" description="ATP synthase subunit a">
    <location>
        <begin position="1"/>
        <end position="249"/>
    </location>
</feature>
<feature type="transmembrane region" description="Helical" evidence="1">
    <location>
        <begin position="33"/>
        <end position="53"/>
    </location>
</feature>
<feature type="transmembrane region" description="Helical" evidence="1">
    <location>
        <begin position="83"/>
        <end position="103"/>
    </location>
</feature>
<feature type="transmembrane region" description="Helical" evidence="1">
    <location>
        <begin position="113"/>
        <end position="133"/>
    </location>
</feature>
<feature type="transmembrane region" description="Helical" evidence="1">
    <location>
        <begin position="139"/>
        <end position="159"/>
    </location>
</feature>
<feature type="transmembrane region" description="Helical" evidence="1">
    <location>
        <begin position="188"/>
        <end position="208"/>
    </location>
</feature>
<feature type="transmembrane region" description="Helical" evidence="1">
    <location>
        <begin position="216"/>
        <end position="236"/>
    </location>
</feature>
<accession>Q89V68</accession>
<reference key="1">
    <citation type="journal article" date="2002" name="DNA Res.">
        <title>Complete genomic sequence of nitrogen-fixing symbiotic bacterium Bradyrhizobium japonicum USDA110.</title>
        <authorList>
            <person name="Kaneko T."/>
            <person name="Nakamura Y."/>
            <person name="Sato S."/>
            <person name="Minamisawa K."/>
            <person name="Uchiumi T."/>
            <person name="Sasamoto S."/>
            <person name="Watanabe A."/>
            <person name="Idesawa K."/>
            <person name="Iriguchi M."/>
            <person name="Kawashima K."/>
            <person name="Kohara M."/>
            <person name="Matsumoto M."/>
            <person name="Shimpo S."/>
            <person name="Tsuruoka H."/>
            <person name="Wada T."/>
            <person name="Yamada M."/>
            <person name="Tabata S."/>
        </authorList>
    </citation>
    <scope>NUCLEOTIDE SEQUENCE [LARGE SCALE GENOMIC DNA]</scope>
    <source>
        <strain>JCM 10833 / BCRC 13528 / IAM 13628 / NBRC 14792 / USDA 110</strain>
    </source>
</reference>
<sequence length="249" mass="27061">MKIDPIHQFNIEPLFTIGHIGHQTIAFTNSSLYMLIAVAIISLLMLASGAQLVPGRLQSVAEISYEFVASTIRSTAGSEGMKFFPLIFSLFMFICVSNLIGIIPYTFTISSHLIVTAALALLVFFTVLIYGVAKNGLKFFSIFVPHGVPGYILPLVMFIEILSFFLRPVSHSVRLFANMLAGHIALKVFAGFVAMLGFSLGALGWVGGVLPLALTVALYALEILVAFLQAYVFAILTCIYLNDAIHPGH</sequence>
<dbReference type="EMBL" id="BA000040">
    <property type="protein sequence ID" value="BAC46453.1"/>
    <property type="molecule type" value="Genomic_DNA"/>
</dbReference>
<dbReference type="RefSeq" id="NP_767828.1">
    <property type="nucleotide sequence ID" value="NC_004463.1"/>
</dbReference>
<dbReference type="RefSeq" id="WP_011084006.1">
    <property type="nucleotide sequence ID" value="NC_004463.1"/>
</dbReference>
<dbReference type="SMR" id="Q89V68"/>
<dbReference type="FunCoup" id="Q89V68">
    <property type="interactions" value="395"/>
</dbReference>
<dbReference type="STRING" id="224911.AAV28_02825"/>
<dbReference type="EnsemblBacteria" id="BAC46453">
    <property type="protein sequence ID" value="BAC46453"/>
    <property type="gene ID" value="BAC46453"/>
</dbReference>
<dbReference type="GeneID" id="46488463"/>
<dbReference type="KEGG" id="bja:bll1188"/>
<dbReference type="PATRIC" id="fig|224911.44.peg.591"/>
<dbReference type="eggNOG" id="COG0356">
    <property type="taxonomic scope" value="Bacteria"/>
</dbReference>
<dbReference type="HOGENOM" id="CLU_041018_0_2_5"/>
<dbReference type="InParanoid" id="Q89V68"/>
<dbReference type="OrthoDB" id="9809130at2"/>
<dbReference type="PhylomeDB" id="Q89V68"/>
<dbReference type="Proteomes" id="UP000002526">
    <property type="component" value="Chromosome"/>
</dbReference>
<dbReference type="GO" id="GO:0005886">
    <property type="term" value="C:plasma membrane"/>
    <property type="evidence" value="ECO:0007669"/>
    <property type="project" value="UniProtKB-SubCell"/>
</dbReference>
<dbReference type="GO" id="GO:0045259">
    <property type="term" value="C:proton-transporting ATP synthase complex"/>
    <property type="evidence" value="ECO:0000318"/>
    <property type="project" value="GO_Central"/>
</dbReference>
<dbReference type="GO" id="GO:0046933">
    <property type="term" value="F:proton-transporting ATP synthase activity, rotational mechanism"/>
    <property type="evidence" value="ECO:0007669"/>
    <property type="project" value="UniProtKB-UniRule"/>
</dbReference>
<dbReference type="GO" id="GO:0015986">
    <property type="term" value="P:proton motive force-driven ATP synthesis"/>
    <property type="evidence" value="ECO:0000318"/>
    <property type="project" value="GO_Central"/>
</dbReference>
<dbReference type="CDD" id="cd00310">
    <property type="entry name" value="ATP-synt_Fo_a_6"/>
    <property type="match status" value="1"/>
</dbReference>
<dbReference type="FunFam" id="1.20.120.220:FF:000003">
    <property type="entry name" value="ATP synthase subunit a"/>
    <property type="match status" value="1"/>
</dbReference>
<dbReference type="Gene3D" id="1.20.120.220">
    <property type="entry name" value="ATP synthase, F0 complex, subunit A"/>
    <property type="match status" value="1"/>
</dbReference>
<dbReference type="HAMAP" id="MF_01393">
    <property type="entry name" value="ATP_synth_a_bact"/>
    <property type="match status" value="1"/>
</dbReference>
<dbReference type="InterPro" id="IPR000568">
    <property type="entry name" value="ATP_synth_F0_asu"/>
</dbReference>
<dbReference type="InterPro" id="IPR023011">
    <property type="entry name" value="ATP_synth_F0_asu_AS"/>
</dbReference>
<dbReference type="InterPro" id="IPR045083">
    <property type="entry name" value="ATP_synth_F0_asu_bact/mt"/>
</dbReference>
<dbReference type="InterPro" id="IPR035908">
    <property type="entry name" value="F0_ATP_A_sf"/>
</dbReference>
<dbReference type="NCBIfam" id="TIGR01131">
    <property type="entry name" value="ATP_synt_6_or_A"/>
    <property type="match status" value="1"/>
</dbReference>
<dbReference type="NCBIfam" id="NF004482">
    <property type="entry name" value="PRK05815.2-4"/>
    <property type="match status" value="1"/>
</dbReference>
<dbReference type="PANTHER" id="PTHR11410">
    <property type="entry name" value="ATP SYNTHASE SUBUNIT A"/>
    <property type="match status" value="1"/>
</dbReference>
<dbReference type="PANTHER" id="PTHR11410:SF0">
    <property type="entry name" value="ATP SYNTHASE SUBUNIT A"/>
    <property type="match status" value="1"/>
</dbReference>
<dbReference type="Pfam" id="PF00119">
    <property type="entry name" value="ATP-synt_A"/>
    <property type="match status" value="1"/>
</dbReference>
<dbReference type="PRINTS" id="PR00123">
    <property type="entry name" value="ATPASEA"/>
</dbReference>
<dbReference type="SUPFAM" id="SSF81336">
    <property type="entry name" value="F1F0 ATP synthase subunit A"/>
    <property type="match status" value="1"/>
</dbReference>
<dbReference type="PROSITE" id="PS00449">
    <property type="entry name" value="ATPASE_A"/>
    <property type="match status" value="1"/>
</dbReference>
<name>ATP6_BRADU</name>
<keyword id="KW-0066">ATP synthesis</keyword>
<keyword id="KW-0997">Cell inner membrane</keyword>
<keyword id="KW-1003">Cell membrane</keyword>
<keyword id="KW-0138">CF(0)</keyword>
<keyword id="KW-0375">Hydrogen ion transport</keyword>
<keyword id="KW-0406">Ion transport</keyword>
<keyword id="KW-0472">Membrane</keyword>
<keyword id="KW-1185">Reference proteome</keyword>
<keyword id="KW-0812">Transmembrane</keyword>
<keyword id="KW-1133">Transmembrane helix</keyword>
<keyword id="KW-0813">Transport</keyword>